<feature type="chain" id="PRO_1000120164" description="Large ribosomal subunit protein bL32">
    <location>
        <begin position="1"/>
        <end position="61"/>
    </location>
</feature>
<feature type="region of interest" description="Disordered" evidence="2">
    <location>
        <begin position="1"/>
        <end position="61"/>
    </location>
</feature>
<feature type="compositionally biased region" description="Basic residues" evidence="2">
    <location>
        <begin position="1"/>
        <end position="16"/>
    </location>
</feature>
<feature type="compositionally biased region" description="Basic and acidic residues" evidence="2">
    <location>
        <begin position="28"/>
        <end position="44"/>
    </location>
</feature>
<gene>
    <name evidence="1" type="primary">rpmF</name>
    <name type="ordered locus">RHECIAT_CH0004303</name>
</gene>
<evidence type="ECO:0000255" key="1">
    <source>
        <dbReference type="HAMAP-Rule" id="MF_00340"/>
    </source>
</evidence>
<evidence type="ECO:0000256" key="2">
    <source>
        <dbReference type="SAM" id="MobiDB-lite"/>
    </source>
</evidence>
<evidence type="ECO:0000305" key="3"/>
<organism>
    <name type="scientific">Rhizobium etli (strain CIAT 652)</name>
    <dbReference type="NCBI Taxonomy" id="491916"/>
    <lineage>
        <taxon>Bacteria</taxon>
        <taxon>Pseudomonadati</taxon>
        <taxon>Pseudomonadota</taxon>
        <taxon>Alphaproteobacteria</taxon>
        <taxon>Hyphomicrobiales</taxon>
        <taxon>Rhizobiaceae</taxon>
        <taxon>Rhizobium/Agrobacterium group</taxon>
        <taxon>Rhizobium</taxon>
    </lineage>
</organism>
<name>RL32_RHIE6</name>
<keyword id="KW-0687">Ribonucleoprotein</keyword>
<keyword id="KW-0689">Ribosomal protein</keyword>
<protein>
    <recommendedName>
        <fullName evidence="1">Large ribosomal subunit protein bL32</fullName>
    </recommendedName>
    <alternativeName>
        <fullName evidence="3">50S ribosomal protein L32</fullName>
    </alternativeName>
</protein>
<comment type="similarity">
    <text evidence="1">Belongs to the bacterial ribosomal protein bL32 family.</text>
</comment>
<sequence>MAVPKRKTSPSKRGMRRSADALKAPTYVEDKNSGELRRPHHIDLKTGMYRGRQVLTPKESA</sequence>
<accession>B3PR77</accession>
<dbReference type="EMBL" id="CP001074">
    <property type="protein sequence ID" value="ACE93231.1"/>
    <property type="molecule type" value="Genomic_DNA"/>
</dbReference>
<dbReference type="SMR" id="B3PR77"/>
<dbReference type="KEGG" id="rec:RHECIAT_CH0004303"/>
<dbReference type="eggNOG" id="COG0333">
    <property type="taxonomic scope" value="Bacteria"/>
</dbReference>
<dbReference type="HOGENOM" id="CLU_129084_2_2_5"/>
<dbReference type="Proteomes" id="UP000008817">
    <property type="component" value="Chromosome"/>
</dbReference>
<dbReference type="GO" id="GO:0015934">
    <property type="term" value="C:large ribosomal subunit"/>
    <property type="evidence" value="ECO:0007669"/>
    <property type="project" value="InterPro"/>
</dbReference>
<dbReference type="GO" id="GO:0003735">
    <property type="term" value="F:structural constituent of ribosome"/>
    <property type="evidence" value="ECO:0007669"/>
    <property type="project" value="InterPro"/>
</dbReference>
<dbReference type="GO" id="GO:0006412">
    <property type="term" value="P:translation"/>
    <property type="evidence" value="ECO:0007669"/>
    <property type="project" value="UniProtKB-UniRule"/>
</dbReference>
<dbReference type="Gene3D" id="1.20.5.640">
    <property type="entry name" value="Single helix bin"/>
    <property type="match status" value="1"/>
</dbReference>
<dbReference type="HAMAP" id="MF_00340">
    <property type="entry name" value="Ribosomal_bL32"/>
    <property type="match status" value="1"/>
</dbReference>
<dbReference type="InterPro" id="IPR002677">
    <property type="entry name" value="Ribosomal_bL32"/>
</dbReference>
<dbReference type="InterPro" id="IPR044957">
    <property type="entry name" value="Ribosomal_bL32_bact"/>
</dbReference>
<dbReference type="InterPro" id="IPR011332">
    <property type="entry name" value="Ribosomal_zn-bd"/>
</dbReference>
<dbReference type="NCBIfam" id="TIGR01031">
    <property type="entry name" value="rpmF_bact"/>
    <property type="match status" value="1"/>
</dbReference>
<dbReference type="PANTHER" id="PTHR35534">
    <property type="entry name" value="50S RIBOSOMAL PROTEIN L32"/>
    <property type="match status" value="1"/>
</dbReference>
<dbReference type="PANTHER" id="PTHR35534:SF1">
    <property type="entry name" value="LARGE RIBOSOMAL SUBUNIT PROTEIN BL32"/>
    <property type="match status" value="1"/>
</dbReference>
<dbReference type="Pfam" id="PF01783">
    <property type="entry name" value="Ribosomal_L32p"/>
    <property type="match status" value="1"/>
</dbReference>
<dbReference type="SUPFAM" id="SSF57829">
    <property type="entry name" value="Zn-binding ribosomal proteins"/>
    <property type="match status" value="1"/>
</dbReference>
<reference key="1">
    <citation type="journal article" date="2010" name="Appl. Environ. Microbiol.">
        <title>Conserved symbiotic plasmid DNA sequences in the multireplicon pangenomic structure of Rhizobium etli.</title>
        <authorList>
            <person name="Gonzalez V."/>
            <person name="Acosta J.L."/>
            <person name="Santamaria R.I."/>
            <person name="Bustos P."/>
            <person name="Fernandez J.L."/>
            <person name="Hernandez Gonzalez I.L."/>
            <person name="Diaz R."/>
            <person name="Flores M."/>
            <person name="Palacios R."/>
            <person name="Mora J."/>
            <person name="Davila G."/>
        </authorList>
    </citation>
    <scope>NUCLEOTIDE SEQUENCE [LARGE SCALE GENOMIC DNA]</scope>
    <source>
        <strain>CIAT 652</strain>
    </source>
</reference>
<proteinExistence type="inferred from homology"/>